<name>PSAI_PICP2</name>
<dbReference type="EMBL" id="U58035">
    <property type="protein sequence ID" value="AAB18909.1"/>
    <property type="molecule type" value="Genomic_DNA"/>
</dbReference>
<dbReference type="EMBL" id="CP000951">
    <property type="protein sequence ID" value="ACB00598.1"/>
    <property type="molecule type" value="Genomic_DNA"/>
</dbReference>
<dbReference type="RefSeq" id="WP_012308216.1">
    <property type="nucleotide sequence ID" value="NZ_JAHHPU010000003.1"/>
</dbReference>
<dbReference type="SMR" id="Q54752"/>
<dbReference type="STRING" id="32049.SYNPCC7002_A2621"/>
<dbReference type="KEGG" id="syp:SYNPCC7002_A2621"/>
<dbReference type="eggNOG" id="ENOG5032P2T">
    <property type="taxonomic scope" value="Bacteria"/>
</dbReference>
<dbReference type="HOGENOM" id="CLU_215282_0_0_3"/>
<dbReference type="Proteomes" id="UP000001688">
    <property type="component" value="Chromosome"/>
</dbReference>
<dbReference type="GO" id="GO:0009522">
    <property type="term" value="C:photosystem I"/>
    <property type="evidence" value="ECO:0007669"/>
    <property type="project" value="UniProtKB-KW"/>
</dbReference>
<dbReference type="GO" id="GO:0031676">
    <property type="term" value="C:plasma membrane-derived thylakoid membrane"/>
    <property type="evidence" value="ECO:0007669"/>
    <property type="project" value="UniProtKB-SubCell"/>
</dbReference>
<dbReference type="GO" id="GO:0015979">
    <property type="term" value="P:photosynthesis"/>
    <property type="evidence" value="ECO:0007669"/>
    <property type="project" value="UniProtKB-UniRule"/>
</dbReference>
<dbReference type="HAMAP" id="MF_00431">
    <property type="entry name" value="PSI_PsaI"/>
    <property type="match status" value="1"/>
</dbReference>
<dbReference type="InterPro" id="IPR001302">
    <property type="entry name" value="PSI_PsaI"/>
</dbReference>
<dbReference type="InterPro" id="IPR036357">
    <property type="entry name" value="PSI_PsaI_sf"/>
</dbReference>
<dbReference type="NCBIfam" id="NF008830">
    <property type="entry name" value="PRK11877.1"/>
    <property type="match status" value="1"/>
</dbReference>
<dbReference type="NCBIfam" id="TIGR03052">
    <property type="entry name" value="PS_I_psaI"/>
    <property type="match status" value="1"/>
</dbReference>
<dbReference type="Pfam" id="PF00796">
    <property type="entry name" value="PSI_8"/>
    <property type="match status" value="1"/>
</dbReference>
<dbReference type="SUPFAM" id="SSF81540">
    <property type="entry name" value="Subunit VIII of photosystem I reaction centre, PsaI"/>
    <property type="match status" value="1"/>
</dbReference>
<comment type="function">
    <text evidence="1">May help in the organization of the PsaL subunit.</text>
</comment>
<comment type="subcellular location">
    <subcellularLocation>
        <location evidence="1">Cellular thylakoid membrane</location>
        <topology evidence="1">Single-pass membrane protein</topology>
    </subcellularLocation>
</comment>
<comment type="similarity">
    <text evidence="3">Belongs to the PsaI family.</text>
</comment>
<reference key="1">
    <citation type="journal article" date="1996" name="Photochem. Photobiol.">
        <title>Characterization of psaI and psaL mutants of Synechococcus sp. strain PCC 7002: a new model for state transitions in cyanobacteria.</title>
        <authorList>
            <person name="Schluchter W.M."/>
            <person name="Shen G."/>
            <person name="Zhao J."/>
            <person name="Bryant D.A."/>
        </authorList>
    </citation>
    <scope>NUCLEOTIDE SEQUENCE [GENOMIC DNA]</scope>
</reference>
<reference key="2">
    <citation type="submission" date="2008-02" db="EMBL/GenBank/DDBJ databases">
        <title>Complete sequence of Synechococcus sp. PCC 7002.</title>
        <authorList>
            <person name="Li T."/>
            <person name="Zhao J."/>
            <person name="Zhao C."/>
            <person name="Liu Z."/>
            <person name="Zhao F."/>
            <person name="Marquardt J."/>
            <person name="Nomura C.T."/>
            <person name="Persson S."/>
            <person name="Detter J.C."/>
            <person name="Richardson P.M."/>
            <person name="Lanz C."/>
            <person name="Schuster S.C."/>
            <person name="Wang J."/>
            <person name="Li S."/>
            <person name="Huang X."/>
            <person name="Cai T."/>
            <person name="Yu Z."/>
            <person name="Luo J."/>
            <person name="Zhao J."/>
            <person name="Bryant D.A."/>
        </authorList>
    </citation>
    <scope>NUCLEOTIDE SEQUENCE [LARGE SCALE GENOMIC DNA]</scope>
    <source>
        <strain>ATCC 27264 / PCC 7002 / PR-6</strain>
    </source>
</reference>
<accession>Q54752</accession>
<accession>B1XLB1</accession>
<sequence length="38" mass="3957">MNGAYAASFLPVILVPLAGVVFPALAMGLLFNYIESDA</sequence>
<keyword id="KW-0472">Membrane</keyword>
<keyword id="KW-0602">Photosynthesis</keyword>
<keyword id="KW-0603">Photosystem I</keyword>
<keyword id="KW-1185">Reference proteome</keyword>
<keyword id="KW-0793">Thylakoid</keyword>
<keyword id="KW-0812">Transmembrane</keyword>
<keyword id="KW-1133">Transmembrane helix</keyword>
<feature type="chain" id="PRO_0000194684" description="Photosystem I reaction center subunit VIII">
    <location>
        <begin position="1"/>
        <end position="38"/>
    </location>
</feature>
<feature type="transmembrane region" description="Helical" evidence="2">
    <location>
        <begin position="9"/>
        <end position="29"/>
    </location>
</feature>
<evidence type="ECO:0000250" key="1"/>
<evidence type="ECO:0000255" key="2"/>
<evidence type="ECO:0000305" key="3"/>
<gene>
    <name type="primary">psaI</name>
    <name type="ordered locus">SYNPCC7002_A2621</name>
</gene>
<protein>
    <recommendedName>
        <fullName>Photosystem I reaction center subunit VIII</fullName>
    </recommendedName>
</protein>
<proteinExistence type="inferred from homology"/>
<organism>
    <name type="scientific">Picosynechococcus sp. (strain ATCC 27264 / PCC 7002 / PR-6)</name>
    <name type="common">Agmenellum quadruplicatum</name>
    <dbReference type="NCBI Taxonomy" id="32049"/>
    <lineage>
        <taxon>Bacteria</taxon>
        <taxon>Bacillati</taxon>
        <taxon>Cyanobacteriota</taxon>
        <taxon>Cyanophyceae</taxon>
        <taxon>Oscillatoriophycideae</taxon>
        <taxon>Chroococcales</taxon>
        <taxon>Geminocystaceae</taxon>
        <taxon>Picosynechococcus</taxon>
    </lineage>
</organism>